<gene>
    <name type="primary">asun</name>
    <name type="synonym">Mat89Bb</name>
    <name type="ORF">GJ23719</name>
</gene>
<sequence>MFERNQKTIFVLDHTRYFSISSEQYISMDYLKGKPVQETPASGSSSMVVGTQLSKSLWTCAVESSIEYCRIVWDLFPGKKHVRFIVSDTAAHIVNTWSPSTQNMSHVSNAMMMVSVPSRSIPQSSDYSVIHGLRAAIEALAEPTDEQLLATQVGCKQIPNKGRVICITSARDNTSMKSLEDIFNTVLLQQNALVAPPSKKGLQIDHCHLVILNIVPLGVESLVTNRNLLEISPLLDVEIHTVNAPDISDKLLHLIMGHYDLASTTVTNIPMKEEQNANSSANYDVEILHERAAHTRVCGPDFTLTTSIKPGTTYETVTLKWCTPRGCGSSDLQPCVGQYNVTPVDVTSRPSSCLINFLLNGRSVLLEVPRKTGTKTTSHMLSARGGEIFVHSLSIARSAMDEAPSISDGPGGRVSDYRIPELGQLFKMSRMVPLKTKPKGKCSQGEHLWRRLPRYFPRTTNVTILFNLQRQLNWLPHFLHLIVKEDMDKQDEVRCQQQIHELYKSASRGDMLPFNTTNNARPKVGKTKDQYRLFYRELEQLIQLNAQTPHHKNLLESLQSLRAAYGDVSSKLDPGASHLRSYTESPLSPERLEPTSSASNSSSSILKASKRRMSSSGQRSLLDMISIAERSQSNKRLDFSGRLCTPLGQTAKLYPDFGNKEKDILTPGVVTSNLKDESIRS</sequence>
<keyword id="KW-0131">Cell cycle</keyword>
<keyword id="KW-0132">Cell division</keyword>
<keyword id="KW-0175">Coiled coil</keyword>
<keyword id="KW-0963">Cytoplasm</keyword>
<keyword id="KW-0217">Developmental protein</keyword>
<keyword id="KW-0221">Differentiation</keyword>
<keyword id="KW-0469">Meiosis</keyword>
<keyword id="KW-0498">Mitosis</keyword>
<keyword id="KW-0539">Nucleus</keyword>
<keyword id="KW-0597">Phosphoprotein</keyword>
<keyword id="KW-1185">Reference proteome</keyword>
<keyword id="KW-0744">Spermatogenesis</keyword>
<comment type="function">
    <text evidence="1">Component of the integrator complex, a multiprotein complex that terminates RNA polymerase II (Pol II) transcription in the promoter-proximal region of genes. The integrator complex provides a quality checkpoint during transcription elongation by driving premature transcription termination of transcripts that are unfavorably configured for transcriptional elongation: the complex terminates transcription by (1) catalyzing dephosphorylation of the C-terminal domain (CTD) of Pol II subunit Polr2A/Rbp1 and Spt5, and (2) degrading the exiting nascent RNA transcript via endonuclease activity. The integrator complex is also involved in the 3'-end processing of the U7 snRNA, and also the spliceosomal snRNAs U1, U2, U4 and U5.</text>
</comment>
<comment type="subunit">
    <text evidence="1">Belongs to the multiprotein complex Integrator, at least composed of IntS1, IntS2, IntS3, IntS4, omd/IntS5, IntS6, defl/IntS7, IntS8, IntS9, IntS10, IntS11, IntS12, asun/IntS13, IntS14 and IntS15. The core complex associates with protein phosphatase 2A subunits mts/PP2A and Pp2A-29B, to form the Integrator-PP2A (INTAC) complex.</text>
</comment>
<comment type="subcellular location">
    <subcellularLocation>
        <location evidence="1">Nucleus</location>
    </subcellularLocation>
    <subcellularLocation>
        <location evidence="1">Cytoplasm</location>
    </subcellularLocation>
    <subcellularLocation>
        <location evidence="1">Cytoplasm</location>
        <location evidence="1">Perinuclear region</location>
    </subcellularLocation>
    <text evidence="1">Colocalizes with dynein-dynactin on the nuclear surface at the meiotic G2/prophase transition in primary spermatocytes. Nuclear location is required for recruitment of dynein motors to nuclear envelope at G2/M.</text>
</comment>
<comment type="PTM">
    <text evidence="1">Phosphorylated.</text>
</comment>
<comment type="similarity">
    <text evidence="3">Belongs to the Integrator subunit 13 family.</text>
</comment>
<organism>
    <name type="scientific">Drosophila virilis</name>
    <name type="common">Fruit fly</name>
    <dbReference type="NCBI Taxonomy" id="7244"/>
    <lineage>
        <taxon>Eukaryota</taxon>
        <taxon>Metazoa</taxon>
        <taxon>Ecdysozoa</taxon>
        <taxon>Arthropoda</taxon>
        <taxon>Hexapoda</taxon>
        <taxon>Insecta</taxon>
        <taxon>Pterygota</taxon>
        <taxon>Neoptera</taxon>
        <taxon>Endopterygota</taxon>
        <taxon>Diptera</taxon>
        <taxon>Brachycera</taxon>
        <taxon>Muscomorpha</taxon>
        <taxon>Ephydroidea</taxon>
        <taxon>Drosophilidae</taxon>
        <taxon>Drosophila</taxon>
    </lineage>
</organism>
<accession>B4LWT5</accession>
<proteinExistence type="inferred from homology"/>
<reference evidence="4" key="1">
    <citation type="journal article" date="2007" name="Nature">
        <title>Evolution of genes and genomes on the Drosophila phylogeny.</title>
        <authorList>
            <consortium name="Drosophila 12 genomes consortium"/>
        </authorList>
    </citation>
    <scope>NUCLEOTIDE SEQUENCE [LARGE SCALE GENOMIC DNA]</scope>
    <source>
        <strain evidence="4">Tucson 15010-1051.87</strain>
    </source>
</reference>
<protein>
    <recommendedName>
        <fullName>Protein asunder</fullName>
    </recommendedName>
    <alternativeName>
        <fullName evidence="1">Cell cycle regulator Mat89Bb</fullName>
    </alternativeName>
    <alternativeName>
        <fullName evidence="1">Maternal transcript 89Bb</fullName>
    </alternativeName>
    <alternativeName>
        <fullName>Set apart in position or space protein</fullName>
    </alternativeName>
</protein>
<name>INT13_DROVI</name>
<evidence type="ECO:0000250" key="1">
    <source>
        <dbReference type="UniProtKB" id="Q9VEX5"/>
    </source>
</evidence>
<evidence type="ECO:0000256" key="2">
    <source>
        <dbReference type="SAM" id="MobiDB-lite"/>
    </source>
</evidence>
<evidence type="ECO:0000305" key="3"/>
<evidence type="ECO:0000312" key="4">
    <source>
        <dbReference type="EMBL" id="EDW66656.1"/>
    </source>
</evidence>
<feature type="chain" id="PRO_0000385348" description="Protein asunder">
    <location>
        <begin position="1"/>
        <end position="681"/>
    </location>
</feature>
<feature type="region of interest" description="Disordered" evidence="2">
    <location>
        <begin position="574"/>
        <end position="619"/>
    </location>
</feature>
<feature type="short sequence motif" description="Nuclear localization signal (NLS)" evidence="1">
    <location>
        <begin position="606"/>
        <end position="612"/>
    </location>
</feature>
<dbReference type="EMBL" id="CH940650">
    <property type="protein sequence ID" value="EDW66656.1"/>
    <property type="molecule type" value="Genomic_DNA"/>
</dbReference>
<dbReference type="RefSeq" id="XP_002053136.2">
    <property type="nucleotide sequence ID" value="XM_002053100.2"/>
</dbReference>
<dbReference type="SMR" id="B4LWT5"/>
<dbReference type="FunCoup" id="B4LWT5">
    <property type="interactions" value="2295"/>
</dbReference>
<dbReference type="STRING" id="7244.B4LWT5"/>
<dbReference type="EnsemblMetazoa" id="FBtr0239644">
    <property type="protein sequence ID" value="FBpp0238136"/>
    <property type="gene ID" value="FBgn0210816"/>
</dbReference>
<dbReference type="EnsemblMetazoa" id="XM_002053100.3">
    <property type="protein sequence ID" value="XP_002053136.2"/>
    <property type="gene ID" value="LOC6630890"/>
</dbReference>
<dbReference type="GeneID" id="6630890"/>
<dbReference type="KEGG" id="dvi:6630890"/>
<dbReference type="CTD" id="41971"/>
<dbReference type="eggNOG" id="KOG3711">
    <property type="taxonomic scope" value="Eukaryota"/>
</dbReference>
<dbReference type="HOGENOM" id="CLU_012654_1_0_1"/>
<dbReference type="InParanoid" id="B4LWT5"/>
<dbReference type="OMA" id="NCTAMHR"/>
<dbReference type="OrthoDB" id="5844105at2759"/>
<dbReference type="PhylomeDB" id="B4LWT5"/>
<dbReference type="Proteomes" id="UP000008792">
    <property type="component" value="Unassembled WGS sequence"/>
</dbReference>
<dbReference type="GO" id="GO:0005737">
    <property type="term" value="C:cytoplasm"/>
    <property type="evidence" value="ECO:0000250"/>
    <property type="project" value="UniProtKB"/>
</dbReference>
<dbReference type="GO" id="GO:0160232">
    <property type="term" value="C:INTAC complex"/>
    <property type="evidence" value="ECO:0007669"/>
    <property type="project" value="EnsemblMetazoa"/>
</dbReference>
<dbReference type="GO" id="GO:0032039">
    <property type="term" value="C:integrator complex"/>
    <property type="evidence" value="ECO:0007669"/>
    <property type="project" value="EnsemblMetazoa"/>
</dbReference>
<dbReference type="GO" id="GO:0005634">
    <property type="term" value="C:nucleus"/>
    <property type="evidence" value="ECO:0000250"/>
    <property type="project" value="UniProtKB"/>
</dbReference>
<dbReference type="GO" id="GO:0048471">
    <property type="term" value="C:perinuclear region of cytoplasm"/>
    <property type="evidence" value="ECO:0007669"/>
    <property type="project" value="UniProtKB-SubCell"/>
</dbReference>
<dbReference type="GO" id="GO:0051301">
    <property type="term" value="P:cell division"/>
    <property type="evidence" value="ECO:0007669"/>
    <property type="project" value="UniProtKB-KW"/>
</dbReference>
<dbReference type="GO" id="GO:0051642">
    <property type="term" value="P:centrosome localization"/>
    <property type="evidence" value="ECO:0007669"/>
    <property type="project" value="EnsemblMetazoa"/>
</dbReference>
<dbReference type="GO" id="GO:0046843">
    <property type="term" value="P:dorsal appendage formation"/>
    <property type="evidence" value="ECO:0007669"/>
    <property type="project" value="EnsemblMetazoa"/>
</dbReference>
<dbReference type="GO" id="GO:0030317">
    <property type="term" value="P:flagellated sperm motility"/>
    <property type="evidence" value="ECO:0000250"/>
    <property type="project" value="UniProtKB"/>
</dbReference>
<dbReference type="GO" id="GO:0051321">
    <property type="term" value="P:meiotic cell cycle"/>
    <property type="evidence" value="ECO:0007669"/>
    <property type="project" value="UniProtKB-KW"/>
</dbReference>
<dbReference type="GO" id="GO:0051663">
    <property type="term" value="P:oocyte nucleus localization involved in oocyte dorsal/ventral axis specification"/>
    <property type="evidence" value="ECO:0007669"/>
    <property type="project" value="EnsemblMetazoa"/>
</dbReference>
<dbReference type="GO" id="GO:0060814">
    <property type="term" value="P:posterior mRNA localization involved in anterior/posterior axis specification"/>
    <property type="evidence" value="ECO:0007669"/>
    <property type="project" value="EnsemblMetazoa"/>
</dbReference>
<dbReference type="GO" id="GO:0080154">
    <property type="term" value="P:regulation of fertilization"/>
    <property type="evidence" value="ECO:0000250"/>
    <property type="project" value="UniProtKB"/>
</dbReference>
<dbReference type="GO" id="GO:0007346">
    <property type="term" value="P:regulation of mitotic cell cycle"/>
    <property type="evidence" value="ECO:0000250"/>
    <property type="project" value="UniProtKB"/>
</dbReference>
<dbReference type="GO" id="GO:0160240">
    <property type="term" value="P:RNA polymerase II transcription initiation surveillance"/>
    <property type="evidence" value="ECO:0007669"/>
    <property type="project" value="EnsemblMetazoa"/>
</dbReference>
<dbReference type="GO" id="GO:0034472">
    <property type="term" value="P:snRNA 3'-end processing"/>
    <property type="evidence" value="ECO:0007669"/>
    <property type="project" value="EnsemblMetazoa"/>
</dbReference>
<dbReference type="GO" id="GO:0007283">
    <property type="term" value="P:spermatogenesis"/>
    <property type="evidence" value="ECO:0007669"/>
    <property type="project" value="UniProtKB-KW"/>
</dbReference>
<dbReference type="InterPro" id="IPR019355">
    <property type="entry name" value="Cell_cycle_regulator_Mat89Bb"/>
</dbReference>
<dbReference type="PANTHER" id="PTHR12955:SF1">
    <property type="entry name" value="INTEGRATOR COMPLEX SUBUNIT 13"/>
    <property type="match status" value="1"/>
</dbReference>
<dbReference type="PANTHER" id="PTHR12955">
    <property type="entry name" value="SARCOMA ANTIGEN NY-SAR-95-RELATED"/>
    <property type="match status" value="1"/>
</dbReference>
<dbReference type="Pfam" id="PF10221">
    <property type="entry name" value="Mat89Bb"/>
    <property type="match status" value="2"/>
</dbReference>